<dbReference type="EMBL" id="AY725016">
    <property type="protein sequence ID" value="AAU21194.1"/>
    <property type="molecule type" value="Genomic_DNA"/>
</dbReference>
<dbReference type="RefSeq" id="NP_001074232.1">
    <property type="nucleotide sequence ID" value="NM_001080763.1"/>
</dbReference>
<dbReference type="SMR" id="Q645S5"/>
<dbReference type="FunCoup" id="Q645S5">
    <property type="interactions" value="229"/>
</dbReference>
<dbReference type="STRING" id="9544.ENSMMUP00000072611"/>
<dbReference type="GlyCosmos" id="Q645S5">
    <property type="glycosylation" value="1 site, No reported glycans"/>
</dbReference>
<dbReference type="GeneID" id="705958"/>
<dbReference type="KEGG" id="mcc:705958"/>
<dbReference type="CTD" id="259285"/>
<dbReference type="InParanoid" id="Q645S5"/>
<dbReference type="OrthoDB" id="8876749at2759"/>
<dbReference type="Proteomes" id="UP000006718">
    <property type="component" value="Unassembled WGS sequence"/>
</dbReference>
<dbReference type="GO" id="GO:0016020">
    <property type="term" value="C:membrane"/>
    <property type="evidence" value="ECO:0000318"/>
    <property type="project" value="GO_Central"/>
</dbReference>
<dbReference type="GO" id="GO:0005886">
    <property type="term" value="C:plasma membrane"/>
    <property type="evidence" value="ECO:0007669"/>
    <property type="project" value="UniProtKB-ARBA"/>
</dbReference>
<dbReference type="GO" id="GO:0033038">
    <property type="term" value="F:bitter taste receptor activity"/>
    <property type="evidence" value="ECO:0000318"/>
    <property type="project" value="GO_Central"/>
</dbReference>
<dbReference type="GO" id="GO:0004930">
    <property type="term" value="F:G protein-coupled receptor activity"/>
    <property type="evidence" value="ECO:0007669"/>
    <property type="project" value="UniProtKB-KW"/>
</dbReference>
<dbReference type="GO" id="GO:0001580">
    <property type="term" value="P:detection of chemical stimulus involved in sensory perception of bitter taste"/>
    <property type="evidence" value="ECO:0000318"/>
    <property type="project" value="GO_Central"/>
</dbReference>
<dbReference type="FunFam" id="1.20.1070.10:FF:000055">
    <property type="entry name" value="Taste receptor type 2"/>
    <property type="match status" value="1"/>
</dbReference>
<dbReference type="Gene3D" id="1.20.1070.10">
    <property type="entry name" value="Rhodopsin 7-helix transmembrane proteins"/>
    <property type="match status" value="1"/>
</dbReference>
<dbReference type="InterPro" id="IPR007960">
    <property type="entry name" value="TAS2R"/>
</dbReference>
<dbReference type="PANTHER" id="PTHR11394">
    <property type="entry name" value="TASTE RECEPTOR TYPE 2"/>
    <property type="match status" value="1"/>
</dbReference>
<dbReference type="PANTHER" id="PTHR11394:SF142">
    <property type="entry name" value="TASTE RECEPTOR TYPE 2 MEMBER 39"/>
    <property type="match status" value="1"/>
</dbReference>
<dbReference type="Pfam" id="PF05296">
    <property type="entry name" value="TAS2R"/>
    <property type="match status" value="1"/>
</dbReference>
<dbReference type="SUPFAM" id="SSF81321">
    <property type="entry name" value="Family A G protein-coupled receptor-like"/>
    <property type="match status" value="1"/>
</dbReference>
<evidence type="ECO:0000250" key="1"/>
<evidence type="ECO:0000255" key="2"/>
<evidence type="ECO:0000305" key="3"/>
<name>T2R39_MACMU</name>
<gene>
    <name type="primary">TAS2R39</name>
</gene>
<keyword id="KW-0297">G-protein coupled receptor</keyword>
<keyword id="KW-0325">Glycoprotein</keyword>
<keyword id="KW-0472">Membrane</keyword>
<keyword id="KW-0675">Receptor</keyword>
<keyword id="KW-1185">Reference proteome</keyword>
<keyword id="KW-0716">Sensory transduction</keyword>
<keyword id="KW-0919">Taste</keyword>
<keyword id="KW-0807">Transducer</keyword>
<keyword id="KW-0812">Transmembrane</keyword>
<keyword id="KW-1133">Transmembrane helix</keyword>
<feature type="chain" id="PRO_0000082282" description="Taste receptor type 2 member 39">
    <location>
        <begin position="1"/>
        <end position="338"/>
    </location>
</feature>
<feature type="topological domain" description="Extracellular" evidence="2">
    <location>
        <begin position="1"/>
        <end position="30"/>
    </location>
</feature>
<feature type="transmembrane region" description="Helical; Name=1" evidence="2">
    <location>
        <begin position="31"/>
        <end position="51"/>
    </location>
</feature>
<feature type="topological domain" description="Cytoplasmic" evidence="2">
    <location>
        <begin position="52"/>
        <end position="74"/>
    </location>
</feature>
<feature type="transmembrane region" description="Helical; Name=2" evidence="2">
    <location>
        <begin position="75"/>
        <end position="95"/>
    </location>
</feature>
<feature type="topological domain" description="Extracellular" evidence="2">
    <location>
        <begin position="96"/>
        <end position="116"/>
    </location>
</feature>
<feature type="transmembrane region" description="Helical; Name=3" evidence="2">
    <location>
        <begin position="117"/>
        <end position="137"/>
    </location>
</feature>
<feature type="topological domain" description="Cytoplasmic" evidence="2">
    <location>
        <begin position="138"/>
        <end position="156"/>
    </location>
</feature>
<feature type="transmembrane region" description="Helical; Name=4" evidence="2">
    <location>
        <begin position="157"/>
        <end position="177"/>
    </location>
</feature>
<feature type="topological domain" description="Extracellular" evidence="2">
    <location>
        <begin position="178"/>
        <end position="205"/>
    </location>
</feature>
<feature type="transmembrane region" description="Helical; Name=5" evidence="2">
    <location>
        <begin position="206"/>
        <end position="226"/>
    </location>
</feature>
<feature type="topological domain" description="Cytoplasmic" evidence="2">
    <location>
        <begin position="227"/>
        <end position="262"/>
    </location>
</feature>
<feature type="transmembrane region" description="Helical; Name=6" evidence="2">
    <location>
        <begin position="263"/>
        <end position="283"/>
    </location>
</feature>
<feature type="topological domain" description="Extracellular" evidence="2">
    <location>
        <begin position="284"/>
        <end position="291"/>
    </location>
</feature>
<feature type="transmembrane region" description="Helical; Name=7" evidence="2">
    <location>
        <begin position="292"/>
        <end position="312"/>
    </location>
</feature>
<feature type="topological domain" description="Cytoplasmic" evidence="2">
    <location>
        <begin position="313"/>
        <end position="338"/>
    </location>
</feature>
<feature type="glycosylation site" description="N-linked (GlcNAc...) asparagine" evidence="2">
    <location>
        <position position="194"/>
    </location>
</feature>
<proteinExistence type="inferred from homology"/>
<comment type="function">
    <text evidence="1">Receptor that may play a role in the perception of bitterness and is gustducin-linked. May play a role in sensing the chemical composition of the gastrointestinal content. The activity of this receptor may stimulate alpha gustducin, mediate PLC-beta-2 activation and lead to the gating of TRPM5 (By similarity).</text>
</comment>
<comment type="subcellular location">
    <subcellularLocation>
        <location>Membrane</location>
        <topology>Multi-pass membrane protein</topology>
    </subcellularLocation>
</comment>
<comment type="miscellaneous">
    <text>Most taste cells may be activated by a limited number of bitter compounds; individual taste cells can discriminate among bitter stimuli.</text>
</comment>
<comment type="similarity">
    <text evidence="3">Belongs to the G-protein coupled receptor T2R family.</text>
</comment>
<accession>Q645S5</accession>
<protein>
    <recommendedName>
        <fullName>Taste receptor type 2 member 39</fullName>
        <shortName>T2R39</shortName>
    </recommendedName>
</protein>
<sequence length="338" mass="38542">MLGRCFPPNTKEKQQLRMIKLCDPAESELSPFLITLTLAVLLAEYLTGIIANGFITAIHAAEWVQNKSVSTSGRILVFLSVSRIALQSLMMLEITISSTSLSFYSEDAVYYAFKISFIFLNFCSLWFAAWLSFFYFVKIANFSYPLFLKLRWRISGLIPWLLWLSVFISFSHSMFCINICTGYCDNSFPIHSSNSTEKTYFSEISVVSLAFFFNLGIVIPLIMFILAAILLILSLKRHTLHMGSNATGSKDPSMEAHIGAIKATSYFLILYIFNAVALFIYLSNMFDINSLWNTLCQIIMAAYPASHSILLIKDNPGLRRAWKQLQHRLHLYPKQWTL</sequence>
<organism>
    <name type="scientific">Macaca mulatta</name>
    <name type="common">Rhesus macaque</name>
    <dbReference type="NCBI Taxonomy" id="9544"/>
    <lineage>
        <taxon>Eukaryota</taxon>
        <taxon>Metazoa</taxon>
        <taxon>Chordata</taxon>
        <taxon>Craniata</taxon>
        <taxon>Vertebrata</taxon>
        <taxon>Euteleostomi</taxon>
        <taxon>Mammalia</taxon>
        <taxon>Eutheria</taxon>
        <taxon>Euarchontoglires</taxon>
        <taxon>Primates</taxon>
        <taxon>Haplorrhini</taxon>
        <taxon>Catarrhini</taxon>
        <taxon>Cercopithecidae</taxon>
        <taxon>Cercopithecinae</taxon>
        <taxon>Macaca</taxon>
    </lineage>
</organism>
<reference key="1">
    <citation type="journal article" date="2005" name="Mol. Biol. Evol.">
        <title>Evolution of bitter taste receptors in humans and apes.</title>
        <authorList>
            <person name="Fischer A."/>
            <person name="Gilad Y."/>
            <person name="Man O."/>
            <person name="Paeaebo S."/>
        </authorList>
    </citation>
    <scope>NUCLEOTIDE SEQUENCE [GENOMIC DNA]</scope>
</reference>